<organism>
    <name type="scientific">Mus musculus</name>
    <name type="common">Mouse</name>
    <dbReference type="NCBI Taxonomy" id="10090"/>
    <lineage>
        <taxon>Eukaryota</taxon>
        <taxon>Metazoa</taxon>
        <taxon>Chordata</taxon>
        <taxon>Craniata</taxon>
        <taxon>Vertebrata</taxon>
        <taxon>Euteleostomi</taxon>
        <taxon>Mammalia</taxon>
        <taxon>Eutheria</taxon>
        <taxon>Euarchontoglires</taxon>
        <taxon>Glires</taxon>
        <taxon>Rodentia</taxon>
        <taxon>Myomorpha</taxon>
        <taxon>Muroidea</taxon>
        <taxon>Muridae</taxon>
        <taxon>Murinae</taxon>
        <taxon>Mus</taxon>
        <taxon>Mus</taxon>
    </lineage>
</organism>
<accession>Q8K301</accession>
<accession>Q3UZY9</accession>
<accession>Q8BV29</accession>
<gene>
    <name type="primary">Ddx52</name>
    <name type="synonym">Rok1</name>
</gene>
<protein>
    <recommendedName>
        <fullName>Probable ATP-dependent RNA helicase DDX52</fullName>
        <ecNumber>3.6.4.13</ecNumber>
    </recommendedName>
    <alternativeName>
        <fullName>ATP-dependent RNA helicase ROK1-like</fullName>
    </alternativeName>
    <alternativeName>
        <fullName>DEAD box protein 52</fullName>
    </alternativeName>
</protein>
<comment type="function">
    <text evidence="2">Required for efficient ribosome biogenesis. May control cell cycle progression by regulating translation of mRNAs that contain a terminal oligo pyrimidine (TOP) motif in their 5' UTRs, such as GTPBP4.</text>
</comment>
<comment type="catalytic activity">
    <reaction>
        <text>ATP + H2O = ADP + phosphate + H(+)</text>
        <dbReference type="Rhea" id="RHEA:13065"/>
        <dbReference type="ChEBI" id="CHEBI:15377"/>
        <dbReference type="ChEBI" id="CHEBI:15378"/>
        <dbReference type="ChEBI" id="CHEBI:30616"/>
        <dbReference type="ChEBI" id="CHEBI:43474"/>
        <dbReference type="ChEBI" id="CHEBI:456216"/>
        <dbReference type="EC" id="3.6.4.13"/>
    </reaction>
</comment>
<comment type="subcellular location">
    <subcellularLocation>
        <location evidence="1">Nucleus</location>
        <location evidence="1">Nucleolus</location>
    </subcellularLocation>
</comment>
<comment type="similarity">
    <text evidence="6">Belongs to the DEAD box helicase family. DDX52/ROK1 subfamily.</text>
</comment>
<feature type="chain" id="PRO_0000055061" description="Probable ATP-dependent RNA helicase DDX52">
    <location>
        <begin position="1"/>
        <end position="598"/>
    </location>
</feature>
<feature type="domain" description="Helicase ATP-binding" evidence="4">
    <location>
        <begin position="197"/>
        <end position="375"/>
    </location>
</feature>
<feature type="domain" description="Helicase C-terminal" evidence="5">
    <location>
        <begin position="386"/>
        <end position="547"/>
    </location>
</feature>
<feature type="short sequence motif" description="Q motif">
    <location>
        <begin position="166"/>
        <end position="194"/>
    </location>
</feature>
<feature type="short sequence motif" description="DEAD box">
    <location>
        <begin position="319"/>
        <end position="322"/>
    </location>
</feature>
<feature type="binding site" evidence="4">
    <location>
        <begin position="210"/>
        <end position="217"/>
    </location>
    <ligand>
        <name>ATP</name>
        <dbReference type="ChEBI" id="CHEBI:30616"/>
    </ligand>
</feature>
<feature type="modified residue" description="N6-acetyllysine" evidence="3">
    <location>
        <position position="15"/>
    </location>
</feature>
<feature type="modified residue" description="Phosphoserine" evidence="3">
    <location>
        <position position="39"/>
    </location>
</feature>
<feature type="sequence conflict" description="In Ref. 4; AAH29094." evidence="6" ref="4">
    <original>Q</original>
    <variation>E</variation>
    <location>
        <position position="75"/>
    </location>
</feature>
<feature type="sequence conflict" description="In Ref. 1; BAC38014." evidence="6" ref="1">
    <original>R</original>
    <variation>K</variation>
    <location>
        <position position="81"/>
    </location>
</feature>
<feature type="sequence conflict" description="In Ref. 4; AAH29094." evidence="6" ref="4">
    <original>F</original>
    <variation>L</variation>
    <location>
        <position position="103"/>
    </location>
</feature>
<feature type="sequence conflict" description="In Ref. 4; AAH29094." evidence="6" ref="4">
    <original>D</original>
    <variation>E</variation>
    <location>
        <position position="119"/>
    </location>
</feature>
<feature type="sequence conflict" description="In Ref. 4; AAH29094." evidence="6" ref="4">
    <original>N</original>
    <variation>S</variation>
    <location>
        <position position="312"/>
    </location>
</feature>
<feature type="sequence conflict" description="In Ref. 4; AAH29094." evidence="6" ref="4">
    <original>V</original>
    <variation>I</variation>
    <location>
        <position position="373"/>
    </location>
</feature>
<reference key="1">
    <citation type="journal article" date="2005" name="Science">
        <title>The transcriptional landscape of the mammalian genome.</title>
        <authorList>
            <person name="Carninci P."/>
            <person name="Kasukawa T."/>
            <person name="Katayama S."/>
            <person name="Gough J."/>
            <person name="Frith M.C."/>
            <person name="Maeda N."/>
            <person name="Oyama R."/>
            <person name="Ravasi T."/>
            <person name="Lenhard B."/>
            <person name="Wells C."/>
            <person name="Kodzius R."/>
            <person name="Shimokawa K."/>
            <person name="Bajic V.B."/>
            <person name="Brenner S.E."/>
            <person name="Batalov S."/>
            <person name="Forrest A.R."/>
            <person name="Zavolan M."/>
            <person name="Davis M.J."/>
            <person name="Wilming L.G."/>
            <person name="Aidinis V."/>
            <person name="Allen J.E."/>
            <person name="Ambesi-Impiombato A."/>
            <person name="Apweiler R."/>
            <person name="Aturaliya R.N."/>
            <person name="Bailey T.L."/>
            <person name="Bansal M."/>
            <person name="Baxter L."/>
            <person name="Beisel K.W."/>
            <person name="Bersano T."/>
            <person name="Bono H."/>
            <person name="Chalk A.M."/>
            <person name="Chiu K.P."/>
            <person name="Choudhary V."/>
            <person name="Christoffels A."/>
            <person name="Clutterbuck D.R."/>
            <person name="Crowe M.L."/>
            <person name="Dalla E."/>
            <person name="Dalrymple B.P."/>
            <person name="de Bono B."/>
            <person name="Della Gatta G."/>
            <person name="di Bernardo D."/>
            <person name="Down T."/>
            <person name="Engstrom P."/>
            <person name="Fagiolini M."/>
            <person name="Faulkner G."/>
            <person name="Fletcher C.F."/>
            <person name="Fukushima T."/>
            <person name="Furuno M."/>
            <person name="Futaki S."/>
            <person name="Gariboldi M."/>
            <person name="Georgii-Hemming P."/>
            <person name="Gingeras T.R."/>
            <person name="Gojobori T."/>
            <person name="Green R.E."/>
            <person name="Gustincich S."/>
            <person name="Harbers M."/>
            <person name="Hayashi Y."/>
            <person name="Hensch T.K."/>
            <person name="Hirokawa N."/>
            <person name="Hill D."/>
            <person name="Huminiecki L."/>
            <person name="Iacono M."/>
            <person name="Ikeo K."/>
            <person name="Iwama A."/>
            <person name="Ishikawa T."/>
            <person name="Jakt M."/>
            <person name="Kanapin A."/>
            <person name="Katoh M."/>
            <person name="Kawasawa Y."/>
            <person name="Kelso J."/>
            <person name="Kitamura H."/>
            <person name="Kitano H."/>
            <person name="Kollias G."/>
            <person name="Krishnan S.P."/>
            <person name="Kruger A."/>
            <person name="Kummerfeld S.K."/>
            <person name="Kurochkin I.V."/>
            <person name="Lareau L.F."/>
            <person name="Lazarevic D."/>
            <person name="Lipovich L."/>
            <person name="Liu J."/>
            <person name="Liuni S."/>
            <person name="McWilliam S."/>
            <person name="Madan Babu M."/>
            <person name="Madera M."/>
            <person name="Marchionni L."/>
            <person name="Matsuda H."/>
            <person name="Matsuzawa S."/>
            <person name="Miki H."/>
            <person name="Mignone F."/>
            <person name="Miyake S."/>
            <person name="Morris K."/>
            <person name="Mottagui-Tabar S."/>
            <person name="Mulder N."/>
            <person name="Nakano N."/>
            <person name="Nakauchi H."/>
            <person name="Ng P."/>
            <person name="Nilsson R."/>
            <person name="Nishiguchi S."/>
            <person name="Nishikawa S."/>
            <person name="Nori F."/>
            <person name="Ohara O."/>
            <person name="Okazaki Y."/>
            <person name="Orlando V."/>
            <person name="Pang K.C."/>
            <person name="Pavan W.J."/>
            <person name="Pavesi G."/>
            <person name="Pesole G."/>
            <person name="Petrovsky N."/>
            <person name="Piazza S."/>
            <person name="Reed J."/>
            <person name="Reid J.F."/>
            <person name="Ring B.Z."/>
            <person name="Ringwald M."/>
            <person name="Rost B."/>
            <person name="Ruan Y."/>
            <person name="Salzberg S.L."/>
            <person name="Sandelin A."/>
            <person name="Schneider C."/>
            <person name="Schoenbach C."/>
            <person name="Sekiguchi K."/>
            <person name="Semple C.A."/>
            <person name="Seno S."/>
            <person name="Sessa L."/>
            <person name="Sheng Y."/>
            <person name="Shibata Y."/>
            <person name="Shimada H."/>
            <person name="Shimada K."/>
            <person name="Silva D."/>
            <person name="Sinclair B."/>
            <person name="Sperling S."/>
            <person name="Stupka E."/>
            <person name="Sugiura K."/>
            <person name="Sultana R."/>
            <person name="Takenaka Y."/>
            <person name="Taki K."/>
            <person name="Tammoja K."/>
            <person name="Tan S.L."/>
            <person name="Tang S."/>
            <person name="Taylor M.S."/>
            <person name="Tegner J."/>
            <person name="Teichmann S.A."/>
            <person name="Ueda H.R."/>
            <person name="van Nimwegen E."/>
            <person name="Verardo R."/>
            <person name="Wei C.L."/>
            <person name="Yagi K."/>
            <person name="Yamanishi H."/>
            <person name="Zabarovsky E."/>
            <person name="Zhu S."/>
            <person name="Zimmer A."/>
            <person name="Hide W."/>
            <person name="Bult C."/>
            <person name="Grimmond S.M."/>
            <person name="Teasdale R.D."/>
            <person name="Liu E.T."/>
            <person name="Brusic V."/>
            <person name="Quackenbush J."/>
            <person name="Wahlestedt C."/>
            <person name="Mattick J.S."/>
            <person name="Hume D.A."/>
            <person name="Kai C."/>
            <person name="Sasaki D."/>
            <person name="Tomaru Y."/>
            <person name="Fukuda S."/>
            <person name="Kanamori-Katayama M."/>
            <person name="Suzuki M."/>
            <person name="Aoki J."/>
            <person name="Arakawa T."/>
            <person name="Iida J."/>
            <person name="Imamura K."/>
            <person name="Itoh M."/>
            <person name="Kato T."/>
            <person name="Kawaji H."/>
            <person name="Kawagashira N."/>
            <person name="Kawashima T."/>
            <person name="Kojima M."/>
            <person name="Kondo S."/>
            <person name="Konno H."/>
            <person name="Nakano K."/>
            <person name="Ninomiya N."/>
            <person name="Nishio T."/>
            <person name="Okada M."/>
            <person name="Plessy C."/>
            <person name="Shibata K."/>
            <person name="Shiraki T."/>
            <person name="Suzuki S."/>
            <person name="Tagami M."/>
            <person name="Waki K."/>
            <person name="Watahiki A."/>
            <person name="Okamura-Oho Y."/>
            <person name="Suzuki H."/>
            <person name="Kawai J."/>
            <person name="Hayashizaki Y."/>
        </authorList>
    </citation>
    <scope>NUCLEOTIDE SEQUENCE [LARGE SCALE MRNA]</scope>
    <source>
        <strain>C57BL/6J</strain>
        <tissue>Retina</tissue>
        <tissue>Xiphoid cartilage</tissue>
    </source>
</reference>
<reference key="2">
    <citation type="journal article" date="2009" name="PLoS Biol.">
        <title>Lineage-specific biology revealed by a finished genome assembly of the mouse.</title>
        <authorList>
            <person name="Church D.M."/>
            <person name="Goodstadt L."/>
            <person name="Hillier L.W."/>
            <person name="Zody M.C."/>
            <person name="Goldstein S."/>
            <person name="She X."/>
            <person name="Bult C.J."/>
            <person name="Agarwala R."/>
            <person name="Cherry J.L."/>
            <person name="DiCuccio M."/>
            <person name="Hlavina W."/>
            <person name="Kapustin Y."/>
            <person name="Meric P."/>
            <person name="Maglott D."/>
            <person name="Birtle Z."/>
            <person name="Marques A.C."/>
            <person name="Graves T."/>
            <person name="Zhou S."/>
            <person name="Teague B."/>
            <person name="Potamousis K."/>
            <person name="Churas C."/>
            <person name="Place M."/>
            <person name="Herschleb J."/>
            <person name="Runnheim R."/>
            <person name="Forrest D."/>
            <person name="Amos-Landgraf J."/>
            <person name="Schwartz D.C."/>
            <person name="Cheng Z."/>
            <person name="Lindblad-Toh K."/>
            <person name="Eichler E.E."/>
            <person name="Ponting C.P."/>
        </authorList>
    </citation>
    <scope>NUCLEOTIDE SEQUENCE [LARGE SCALE GENOMIC DNA]</scope>
    <source>
        <strain>C57BL/6J</strain>
    </source>
</reference>
<reference key="3">
    <citation type="submission" date="2005-07" db="EMBL/GenBank/DDBJ databases">
        <authorList>
            <person name="Mural R.J."/>
            <person name="Adams M.D."/>
            <person name="Myers E.W."/>
            <person name="Smith H.O."/>
            <person name="Venter J.C."/>
        </authorList>
    </citation>
    <scope>NUCLEOTIDE SEQUENCE [LARGE SCALE GENOMIC DNA]</scope>
</reference>
<reference key="4">
    <citation type="journal article" date="2004" name="Genome Res.">
        <title>The status, quality, and expansion of the NIH full-length cDNA project: the Mammalian Gene Collection (MGC).</title>
        <authorList>
            <consortium name="The MGC Project Team"/>
        </authorList>
    </citation>
    <scope>NUCLEOTIDE SEQUENCE [LARGE SCALE MRNA]</scope>
    <source>
        <tissue>Mammary tumor</tissue>
    </source>
</reference>
<name>DDX52_MOUSE</name>
<keyword id="KW-0007">Acetylation</keyword>
<keyword id="KW-0067">ATP-binding</keyword>
<keyword id="KW-0347">Helicase</keyword>
<keyword id="KW-0378">Hydrolase</keyword>
<keyword id="KW-0547">Nucleotide-binding</keyword>
<keyword id="KW-0539">Nucleus</keyword>
<keyword id="KW-0597">Phosphoprotein</keyword>
<keyword id="KW-1185">Reference proteome</keyword>
<keyword id="KW-0694">RNA-binding</keyword>
<proteinExistence type="evidence at transcript level"/>
<sequence>MDSYDLFRRLGAGAKFDVKRFSADATRFQVGKRKFDSESLEVLKGLDFFGNKKSVSDECGALQIHQEPPNEEKTQGVLLERSKEPKKKKRKKMTSEVPAQEDFDGGIQWTSSVEAKLQDEKVSGEKKLTSGKLEHLRKEKVNFFRNKHKIHVQGTDLPDPIATFQQLDQEYKINSRLLQNILDAGFQVPTPIQMQAIPVMLHGRELLASAPTGSGKTLAFSIPILMQLKQPTNKGFRALVISPTRELASQIHRELIKISEGTGFRIHMIHKAAIAAKKFGPKSSKKFDILVTTPNRLIYLLKQDPPGIDLTNVEWLVVDESDKLFEDGKTGFREQLASIFLACTSPKVRRAMFSATFAYDVEQWCKLNLDNVVSVSIGARNSAVETVEQELLFVGSETGKLLAMRELVKKGFKPPVLVFVQSIERAKELFHELIYEGINVDVIHAERTQQQRDNTVHSFRAGKIWVLICTALLARGIDFKGVNLVINYDFPTSSVEYIHRIGRTGRAGNRGKAVTFFTEDDKPLLRSVANVIQQAGCPVPEYIKGFQKLLSKQKKKMIKKPLERESICTTPKYFLEQAKQKKVAGQNSKKKETLKEKS</sequence>
<evidence type="ECO:0000250" key="1"/>
<evidence type="ECO:0000250" key="2">
    <source>
        <dbReference type="UniProtKB" id="Q9VVK8"/>
    </source>
</evidence>
<evidence type="ECO:0000250" key="3">
    <source>
        <dbReference type="UniProtKB" id="Q9Y2R4"/>
    </source>
</evidence>
<evidence type="ECO:0000255" key="4">
    <source>
        <dbReference type="PROSITE-ProRule" id="PRU00541"/>
    </source>
</evidence>
<evidence type="ECO:0000255" key="5">
    <source>
        <dbReference type="PROSITE-ProRule" id="PRU00542"/>
    </source>
</evidence>
<evidence type="ECO:0000305" key="6"/>
<dbReference type="EC" id="3.6.4.13"/>
<dbReference type="EMBL" id="AK080767">
    <property type="protein sequence ID" value="BAC38014.1"/>
    <property type="molecule type" value="mRNA"/>
</dbReference>
<dbReference type="EMBL" id="AK133545">
    <property type="protein sequence ID" value="BAE21716.1"/>
    <property type="molecule type" value="mRNA"/>
</dbReference>
<dbReference type="EMBL" id="AL645615">
    <property type="status" value="NOT_ANNOTATED_CDS"/>
    <property type="molecule type" value="Genomic_DNA"/>
</dbReference>
<dbReference type="EMBL" id="CH466556">
    <property type="protein sequence ID" value="EDL15728.1"/>
    <property type="molecule type" value="Genomic_DNA"/>
</dbReference>
<dbReference type="EMBL" id="BC029094">
    <property type="protein sequence ID" value="AAH29094.1"/>
    <property type="molecule type" value="mRNA"/>
</dbReference>
<dbReference type="CCDS" id="CCDS25180.1"/>
<dbReference type="RefSeq" id="NP_084372.2">
    <property type="nucleotide sequence ID" value="NM_030096.2"/>
</dbReference>
<dbReference type="SMR" id="Q8K301"/>
<dbReference type="BioGRID" id="219368">
    <property type="interactions" value="1"/>
</dbReference>
<dbReference type="FunCoup" id="Q8K301">
    <property type="interactions" value="2881"/>
</dbReference>
<dbReference type="STRING" id="10090.ENSMUSP00000048802"/>
<dbReference type="iPTMnet" id="Q8K301"/>
<dbReference type="PhosphoSitePlus" id="Q8K301"/>
<dbReference type="PaxDb" id="10090-ENSMUSP00000048802"/>
<dbReference type="ProteomicsDB" id="279905"/>
<dbReference type="Pumba" id="Q8K301"/>
<dbReference type="Antibodypedia" id="74465">
    <property type="antibodies" value="113 antibodies from 24 providers"/>
</dbReference>
<dbReference type="DNASU" id="78394"/>
<dbReference type="Ensembl" id="ENSMUST00000049257.8">
    <property type="protein sequence ID" value="ENSMUSP00000048802.8"/>
    <property type="gene ID" value="ENSMUSG00000020677.8"/>
</dbReference>
<dbReference type="GeneID" id="78394"/>
<dbReference type="KEGG" id="mmu:78394"/>
<dbReference type="UCSC" id="uc007kpz.2">
    <property type="organism name" value="mouse"/>
</dbReference>
<dbReference type="AGR" id="MGI:1925644"/>
<dbReference type="CTD" id="11056"/>
<dbReference type="MGI" id="MGI:1925644">
    <property type="gene designation" value="Ddx52"/>
</dbReference>
<dbReference type="VEuPathDB" id="HostDB:ENSMUSG00000020677"/>
<dbReference type="eggNOG" id="KOG0344">
    <property type="taxonomic scope" value="Eukaryota"/>
</dbReference>
<dbReference type="GeneTree" id="ENSGT00550000074863"/>
<dbReference type="HOGENOM" id="CLU_003041_1_4_1"/>
<dbReference type="InParanoid" id="Q8K301"/>
<dbReference type="OMA" id="DRALMAC"/>
<dbReference type="OrthoDB" id="360161at2759"/>
<dbReference type="PhylomeDB" id="Q8K301"/>
<dbReference type="TreeFam" id="TF314448"/>
<dbReference type="Reactome" id="R-MMU-6791226">
    <property type="pathway name" value="Major pathway of rRNA processing in the nucleolus and cytosol"/>
</dbReference>
<dbReference type="BioGRID-ORCS" id="78394">
    <property type="hits" value="29 hits in 82 CRISPR screens"/>
</dbReference>
<dbReference type="ChiTaRS" id="Ddx52">
    <property type="organism name" value="mouse"/>
</dbReference>
<dbReference type="PRO" id="PR:Q8K301"/>
<dbReference type="Proteomes" id="UP000000589">
    <property type="component" value="Chromosome 11"/>
</dbReference>
<dbReference type="RNAct" id="Q8K301">
    <property type="molecule type" value="protein"/>
</dbReference>
<dbReference type="Bgee" id="ENSMUSG00000020677">
    <property type="expression patterns" value="Expressed in undifferentiated genital tubercle and 265 other cell types or tissues"/>
</dbReference>
<dbReference type="GO" id="GO:0005730">
    <property type="term" value="C:nucleolus"/>
    <property type="evidence" value="ECO:0007669"/>
    <property type="project" value="UniProtKB-SubCell"/>
</dbReference>
<dbReference type="GO" id="GO:0005524">
    <property type="term" value="F:ATP binding"/>
    <property type="evidence" value="ECO:0007669"/>
    <property type="project" value="UniProtKB-KW"/>
</dbReference>
<dbReference type="GO" id="GO:0016887">
    <property type="term" value="F:ATP hydrolysis activity"/>
    <property type="evidence" value="ECO:0007669"/>
    <property type="project" value="RHEA"/>
</dbReference>
<dbReference type="GO" id="GO:0003723">
    <property type="term" value="F:RNA binding"/>
    <property type="evidence" value="ECO:0007669"/>
    <property type="project" value="UniProtKB-KW"/>
</dbReference>
<dbReference type="GO" id="GO:0003724">
    <property type="term" value="F:RNA helicase activity"/>
    <property type="evidence" value="ECO:0007669"/>
    <property type="project" value="UniProtKB-EC"/>
</dbReference>
<dbReference type="GO" id="GO:0030490">
    <property type="term" value="P:maturation of SSU-rRNA"/>
    <property type="evidence" value="ECO:0007669"/>
    <property type="project" value="InterPro"/>
</dbReference>
<dbReference type="CDD" id="cd17957">
    <property type="entry name" value="DEADc_DDX52"/>
    <property type="match status" value="1"/>
</dbReference>
<dbReference type="CDD" id="cd18787">
    <property type="entry name" value="SF2_C_DEAD"/>
    <property type="match status" value="1"/>
</dbReference>
<dbReference type="FunFam" id="3.40.50.300:FF:000906">
    <property type="entry name" value="Probable ATP-dependent RNA helicase DDX52"/>
    <property type="match status" value="1"/>
</dbReference>
<dbReference type="FunFam" id="3.40.50.300:FF:000759">
    <property type="entry name" value="probable ATP-dependent RNA helicase DDX52"/>
    <property type="match status" value="1"/>
</dbReference>
<dbReference type="Gene3D" id="3.40.50.300">
    <property type="entry name" value="P-loop containing nucleotide triphosphate hydrolases"/>
    <property type="match status" value="2"/>
</dbReference>
<dbReference type="InterPro" id="IPR044764">
    <property type="entry name" value="DDX52/Rok1_DEADc"/>
</dbReference>
<dbReference type="InterPro" id="IPR011545">
    <property type="entry name" value="DEAD/DEAH_box_helicase_dom"/>
</dbReference>
<dbReference type="InterPro" id="IPR050079">
    <property type="entry name" value="DEAD_box_RNA_helicase"/>
</dbReference>
<dbReference type="InterPro" id="IPR014001">
    <property type="entry name" value="Helicase_ATP-bd"/>
</dbReference>
<dbReference type="InterPro" id="IPR001650">
    <property type="entry name" value="Helicase_C-like"/>
</dbReference>
<dbReference type="InterPro" id="IPR027417">
    <property type="entry name" value="P-loop_NTPase"/>
</dbReference>
<dbReference type="InterPro" id="IPR014014">
    <property type="entry name" value="RNA_helicase_DEAD_Q_motif"/>
</dbReference>
<dbReference type="PANTHER" id="PTHR47959">
    <property type="entry name" value="ATP-DEPENDENT RNA HELICASE RHLE-RELATED"/>
    <property type="match status" value="1"/>
</dbReference>
<dbReference type="PANTHER" id="PTHR47959:SF15">
    <property type="entry name" value="RNA HELICASE"/>
    <property type="match status" value="1"/>
</dbReference>
<dbReference type="Pfam" id="PF00270">
    <property type="entry name" value="DEAD"/>
    <property type="match status" value="1"/>
</dbReference>
<dbReference type="Pfam" id="PF00271">
    <property type="entry name" value="Helicase_C"/>
    <property type="match status" value="1"/>
</dbReference>
<dbReference type="SMART" id="SM00487">
    <property type="entry name" value="DEXDc"/>
    <property type="match status" value="1"/>
</dbReference>
<dbReference type="SMART" id="SM00490">
    <property type="entry name" value="HELICc"/>
    <property type="match status" value="1"/>
</dbReference>
<dbReference type="SUPFAM" id="SSF52540">
    <property type="entry name" value="P-loop containing nucleoside triphosphate hydrolases"/>
    <property type="match status" value="1"/>
</dbReference>
<dbReference type="PROSITE" id="PS51192">
    <property type="entry name" value="HELICASE_ATP_BIND_1"/>
    <property type="match status" value="1"/>
</dbReference>
<dbReference type="PROSITE" id="PS51194">
    <property type="entry name" value="HELICASE_CTER"/>
    <property type="match status" value="1"/>
</dbReference>
<dbReference type="PROSITE" id="PS51195">
    <property type="entry name" value="Q_MOTIF"/>
    <property type="match status" value="1"/>
</dbReference>